<protein>
    <recommendedName>
        <fullName>Capsid protein precursor</fullName>
    </recommendedName>
    <component>
        <recommendedName>
            <fullName>7 kDa polypeptide</fullName>
        </recommendedName>
    </component>
    <component>
        <recommendedName>
            <fullName>Capsid protein</fullName>
            <shortName>CP</shortName>
        </recommendedName>
    </component>
</protein>
<sequence length="552" mass="62029">MKQNDTKKTTQRRNSKKYSSKTNRGTKRAPRDQEVGTGAQESTRNDVAWYARYPHILEEATRLPFAYPIGQYYDTGYSVASATEWSKYVDTSLTIPGVMCVNFTPTPGESYNKNSPINIAAQNVYTYVRHMNSGHANYEQADLMMYLLAMDSLYIFHSYVRKILAISKLYTPVNKYFPRALLVALGVDPEDVFANQAQWEYFVNMVAYRAGAFAAPASMTYYERHAWMSNGLYVDQDVTRAQIYMFKPTMLWKYENLGTTGTKLVPLMMPKAGDNRKLVDFQVLFNNLVSTMLGDEDFGIMSGDVFKAFGADGLVKLLAVDSTTMTLPTYDPLILAQIHSARAVGAPILETSTLTGFPGRQWQITQNPDVNNGAIIFHPSFGYDGQDHEELSFRAMCSNMILNLPGEAHSAEMIIEATRLATMFQVKAVPAGDTSKPVLYLPNGFGTEVVNDYTMISVDKATPHDLTIHTFFNNILVPNAKENYVANLELLNNIIQFDWAPQLYLTYGIAQESFGPFAQLNDWTILTGETLARMHEVCVTSMFDVPQMGFNK</sequence>
<evidence type="ECO:0000256" key="1">
    <source>
        <dbReference type="SAM" id="MobiDB-lite"/>
    </source>
</evidence>
<evidence type="ECO:0000269" key="2">
    <source>
    </source>
</evidence>
<evidence type="ECO:0007829" key="3">
    <source>
        <dbReference type="PDB" id="6Z8D"/>
    </source>
</evidence>
<evidence type="ECO:0007829" key="4">
    <source>
        <dbReference type="PDB" id="6Z8E"/>
    </source>
</evidence>
<evidence type="ECO:0007829" key="5">
    <source>
        <dbReference type="PDB" id="6Z8F"/>
    </source>
</evidence>
<accession>Q50LE5</accession>
<feature type="chain" id="PRO_0000379521" description="Capsid protein precursor">
    <location>
        <begin position="1"/>
        <end position="552"/>
    </location>
</feature>
<feature type="chain" id="PRO_0000379522" description="7 kDa polypeptide">
    <location>
        <begin position="1"/>
        <end position="65"/>
    </location>
</feature>
<feature type="chain" id="PRO_0000379523" description="Capsid protein">
    <location>
        <begin position="66"/>
        <end position="552"/>
    </location>
</feature>
<feature type="region of interest" description="Disordered" evidence="1">
    <location>
        <begin position="1"/>
        <end position="41"/>
    </location>
</feature>
<feature type="compositionally biased region" description="Basic residues" evidence="1">
    <location>
        <begin position="9"/>
        <end position="28"/>
    </location>
</feature>
<feature type="site" description="Cleavage">
    <location>
        <begin position="65"/>
        <end position="66"/>
    </location>
</feature>
<feature type="helix" evidence="3">
    <location>
        <begin position="49"/>
        <end position="52"/>
    </location>
</feature>
<feature type="helix" evidence="3">
    <location>
        <begin position="54"/>
        <end position="60"/>
    </location>
</feature>
<feature type="strand" evidence="3">
    <location>
        <begin position="69"/>
        <end position="71"/>
    </location>
</feature>
<feature type="strand" evidence="3">
    <location>
        <begin position="77"/>
        <end position="81"/>
    </location>
</feature>
<feature type="helix" evidence="3">
    <location>
        <begin position="82"/>
        <end position="84"/>
    </location>
</feature>
<feature type="turn" evidence="3">
    <location>
        <begin position="86"/>
        <end position="88"/>
    </location>
</feature>
<feature type="strand" evidence="3">
    <location>
        <begin position="98"/>
        <end position="105"/>
    </location>
</feature>
<feature type="strand" evidence="3">
    <location>
        <begin position="110"/>
        <end position="112"/>
    </location>
</feature>
<feature type="helix" evidence="3">
    <location>
        <begin position="116"/>
        <end position="129"/>
    </location>
</feature>
<feature type="helix" evidence="3">
    <location>
        <begin position="140"/>
        <end position="166"/>
    </location>
</feature>
<feature type="turn" evidence="3">
    <location>
        <begin position="175"/>
        <end position="178"/>
    </location>
</feature>
<feature type="helix" evidence="3">
    <location>
        <begin position="179"/>
        <end position="184"/>
    </location>
</feature>
<feature type="helix" evidence="3">
    <location>
        <begin position="189"/>
        <end position="194"/>
    </location>
</feature>
<feature type="helix" evidence="3">
    <location>
        <begin position="196"/>
        <end position="210"/>
    </location>
</feature>
<feature type="strand" evidence="4">
    <location>
        <begin position="216"/>
        <end position="219"/>
    </location>
</feature>
<feature type="helix" evidence="3">
    <location>
        <begin position="220"/>
        <end position="229"/>
    </location>
</feature>
<feature type="strand" evidence="3">
    <location>
        <begin position="232"/>
        <end position="238"/>
    </location>
</feature>
<feature type="strand" evidence="3">
    <location>
        <begin position="243"/>
        <end position="253"/>
    </location>
</feature>
<feature type="strand" evidence="3">
    <location>
        <begin position="256"/>
        <end position="258"/>
    </location>
</feature>
<feature type="strand" evidence="3">
    <location>
        <begin position="261"/>
        <end position="268"/>
    </location>
</feature>
<feature type="helix" evidence="3">
    <location>
        <begin position="278"/>
        <end position="288"/>
    </location>
</feature>
<feature type="turn" evidence="3">
    <location>
        <begin position="290"/>
        <end position="292"/>
    </location>
</feature>
<feature type="helix" evidence="3">
    <location>
        <begin position="296"/>
        <end position="308"/>
    </location>
</feature>
<feature type="helix" evidence="3">
    <location>
        <begin position="311"/>
        <end position="313"/>
    </location>
</feature>
<feature type="helix" evidence="3">
    <location>
        <begin position="332"/>
        <end position="339"/>
    </location>
</feature>
<feature type="strand" evidence="3">
    <location>
        <begin position="364"/>
        <end position="366"/>
    </location>
</feature>
<feature type="helix" evidence="3">
    <location>
        <begin position="371"/>
        <end position="373"/>
    </location>
</feature>
<feature type="strand" evidence="3">
    <location>
        <begin position="385"/>
        <end position="388"/>
    </location>
</feature>
<feature type="helix" evidence="3">
    <location>
        <begin position="391"/>
        <end position="397"/>
    </location>
</feature>
<feature type="strand" evidence="3">
    <location>
        <begin position="401"/>
        <end position="407"/>
    </location>
</feature>
<feature type="helix" evidence="3">
    <location>
        <begin position="411"/>
        <end position="416"/>
    </location>
</feature>
<feature type="turn" evidence="4">
    <location>
        <begin position="417"/>
        <end position="420"/>
    </location>
</feature>
<feature type="strand" evidence="3">
    <location>
        <begin position="424"/>
        <end position="427"/>
    </location>
</feature>
<feature type="strand" evidence="3">
    <location>
        <begin position="431"/>
        <end position="433"/>
    </location>
</feature>
<feature type="strand" evidence="3">
    <location>
        <begin position="440"/>
        <end position="443"/>
    </location>
</feature>
<feature type="strand" evidence="3">
    <location>
        <begin position="447"/>
        <end position="458"/>
    </location>
</feature>
<feature type="strand" evidence="5">
    <location>
        <begin position="460"/>
        <end position="463"/>
    </location>
</feature>
<feature type="strand" evidence="3">
    <location>
        <begin position="466"/>
        <end position="471"/>
    </location>
</feature>
<feature type="strand" evidence="3">
    <location>
        <begin position="473"/>
        <end position="477"/>
    </location>
</feature>
<feature type="strand" evidence="3">
    <location>
        <begin position="479"/>
        <end position="481"/>
    </location>
</feature>
<feature type="helix" evidence="3">
    <location>
        <begin position="482"/>
        <end position="494"/>
    </location>
</feature>
<feature type="strand" evidence="3">
    <location>
        <begin position="503"/>
        <end position="507"/>
    </location>
</feature>
<feature type="turn" evidence="3">
    <location>
        <begin position="508"/>
        <end position="511"/>
    </location>
</feature>
<feature type="strand" evidence="3">
    <location>
        <begin position="512"/>
        <end position="518"/>
    </location>
</feature>
<feature type="strand" evidence="3">
    <location>
        <begin position="521"/>
        <end position="525"/>
    </location>
</feature>
<feature type="helix" evidence="3">
    <location>
        <begin position="528"/>
        <end position="542"/>
    </location>
</feature>
<keyword id="KW-0002">3D-structure</keyword>
<keyword id="KW-0007">Acetylation</keyword>
<keyword id="KW-0167">Capsid protein</keyword>
<keyword id="KW-1185">Reference proteome</keyword>
<keyword id="KW-1142">T=3 icosahedral capsid protein</keyword>
<keyword id="KW-0946">Virion</keyword>
<reference key="1">
    <citation type="journal article" date="2005" name="J. Virol. Methods">
        <title>Complete nucleotide sequences of two RNA segments of human picobirnavirus.</title>
        <authorList>
            <person name="Wakuda M."/>
            <person name="Pongsuwanna Y."/>
            <person name="Taniguchi K."/>
        </authorList>
    </citation>
    <scope>NUCLEOTIDE SEQUENCE [GENOMIC RNA]</scope>
</reference>
<reference key="2">
    <citation type="journal article" date="2009" name="EMBO J.">
        <title>The picobirnavirus crystal structure provides functional insights into virion assembly and cell entry.</title>
        <authorList>
            <person name="Duquerroy S."/>
            <person name="Da Costa B."/>
            <person name="Henry C."/>
            <person name="Vigouroux A."/>
            <person name="Libersou S."/>
            <person name="Lepault J."/>
            <person name="Navaza J."/>
            <person name="Delmas B."/>
            <person name="Rey F.A."/>
        </authorList>
    </citation>
    <scope>X-RAY CRYSTALLOGRAPHY (3.4 ANGSTROMS) OF CAPSID SHELL</scope>
    <scope>FUNCTION</scope>
    <scope>SUBCELLULAR LOCATION</scope>
    <scope>AUTOCATALYTIC CLEAVAGE</scope>
    <scope>PROBABLE ACETYLATION</scope>
</reference>
<dbReference type="EMBL" id="AB186897">
    <property type="protein sequence ID" value="BAD98235.1"/>
    <property type="molecule type" value="Genomic_RNA"/>
</dbReference>
<dbReference type="RefSeq" id="YP_239360.1">
    <property type="nucleotide sequence ID" value="NC_007026.1"/>
</dbReference>
<dbReference type="PDB" id="6Z8D">
    <property type="method" value="EM"/>
    <property type="resolution" value="2.63 A"/>
    <property type="chains" value="A/B=1-552"/>
</dbReference>
<dbReference type="PDB" id="6Z8E">
    <property type="method" value="EM"/>
    <property type="resolution" value="2.80 A"/>
    <property type="chains" value="A/B=1-552"/>
</dbReference>
<dbReference type="PDB" id="6Z8F">
    <property type="method" value="EM"/>
    <property type="resolution" value="2.80 A"/>
    <property type="chains" value="A/B=41-552"/>
</dbReference>
<dbReference type="PDBsum" id="6Z8D"/>
<dbReference type="PDBsum" id="6Z8E"/>
<dbReference type="PDBsum" id="6Z8F"/>
<dbReference type="EMDB" id="EMD-11115"/>
<dbReference type="EMDB" id="EMD-11116"/>
<dbReference type="EMDB" id="EMD-11117"/>
<dbReference type="SMR" id="Q50LE5"/>
<dbReference type="IntAct" id="Q50LE5">
    <property type="interactions" value="1"/>
</dbReference>
<dbReference type="MEROPS" id="N05.001"/>
<dbReference type="KEGG" id="vg:5075907"/>
<dbReference type="Proteomes" id="UP000007252">
    <property type="component" value="Genome"/>
</dbReference>
<dbReference type="GO" id="GO:0039617">
    <property type="term" value="C:T=3 icosahedral viral capsid"/>
    <property type="evidence" value="ECO:0007669"/>
    <property type="project" value="UniProtKB-KW"/>
</dbReference>
<dbReference type="Gene3D" id="1.20.140.120">
    <property type="match status" value="2"/>
</dbReference>
<dbReference type="InterPro" id="IPR048835">
    <property type="entry name" value="CP_picobirnavirus"/>
</dbReference>
<dbReference type="InterPro" id="IPR049178">
    <property type="entry name" value="CP_picobirnavirus_sf"/>
</dbReference>
<dbReference type="Pfam" id="PF20816">
    <property type="entry name" value="PBV_CP"/>
    <property type="match status" value="1"/>
</dbReference>
<organism>
    <name type="scientific">Human picobirnavirus (strain Human/Thailand/Hy005102/-)</name>
    <name type="common">PBV</name>
    <dbReference type="NCBI Taxonomy" id="647332"/>
    <lineage>
        <taxon>Viruses</taxon>
        <taxon>Riboviria</taxon>
        <taxon>Orthornavirae</taxon>
        <taxon>Pisuviricota</taxon>
        <taxon>Duplopiviricetes</taxon>
        <taxon>Durnavirales</taxon>
        <taxon>Picobirnaviridae</taxon>
        <taxon>Orthopicobirnavirus</taxon>
        <taxon>Orthopicobirnavirus hominis</taxon>
    </lineage>
</organism>
<organismHost>
    <name type="scientific">Homo sapiens</name>
    <name type="common">Human</name>
    <dbReference type="NCBI Taxonomy" id="9606"/>
</organismHost>
<name>CAPSD_HPBVH</name>
<gene>
    <name type="primary">Segment-1</name>
    <name type="ORF">ORF2</name>
</gene>
<comment type="function">
    <text evidence="2">The capsid protein self-assembles to form an icosahedral capsid with a T=2 symmetry made of 120 subunits.</text>
</comment>
<comment type="subunit">
    <text>Homodimer.</text>
</comment>
<comment type="subcellular location">
    <molecule>Capsid protein</molecule>
    <subcellularLocation>
        <location evidence="2">Virion</location>
    </subcellularLocation>
</comment>
<comment type="subcellular location">
    <molecule>7 kDa polypeptide</molecule>
    <subcellularLocation>
        <location evidence="2">Virion</location>
    </subcellularLocation>
</comment>
<comment type="PTM">
    <text evidence="2">The 7 kDa polypeptide is acetylated.</text>
</comment>
<comment type="PTM">
    <text evidence="2">Autocatalytic proteolysis releases a post-translationally modified peptide that remains associated with nucleic acid within the virion. This peptide is observed only when nucleic acid is packaged in the capsid.</text>
</comment>
<comment type="miscellaneous">
    <text>Picobirnavirus particles are capable of disrupting biological membranes in vitro.</text>
</comment>
<proteinExistence type="evidence at protein level"/>